<sequence length="391" mass="41859">MYQGLALAPNHGQSAYSHDSGNFLHSSAGSPVYVPTTRVPSVLQTLPYLQSCEPHQSHLGNPPGWAQSSGETTAFNAGSPHPPSGFSYPHSPRAAAPRGVDGAYQGPLLLGGGGREQYGNALVRSVNGSYSSPYPAYVTPELPPSWTAGHFESSVLHSLQTRQAALPGRRSTFEYLEEFPGDGRECVNCGAMSTPLWRKDGTGHYLCNACGLYHKMNGINRPLKPQKRLSSSRRAGLCCTNCHTTNTTLWRRNAEGEPVCNACGLYMKLHGVPRPLAMKKESIQTRKRKPKNITKGKTSTGSTTSATNSPSSITNSDSTVTLKSEPSTTSQYPGQGIVSVSQAQSQSDEALAGGEFKFEPEDYPFSPSSMAPQPGLSVPLRQDSWCALALA</sequence>
<evidence type="ECO:0000255" key="1">
    <source>
        <dbReference type="PROSITE-ProRule" id="PRU00094"/>
    </source>
</evidence>
<evidence type="ECO:0000256" key="2">
    <source>
        <dbReference type="SAM" id="MobiDB-lite"/>
    </source>
</evidence>
<evidence type="ECO:0000269" key="3">
    <source>
    </source>
</evidence>
<accession>P43692</accession>
<keyword id="KW-0010">Activator</keyword>
<keyword id="KW-0238">DNA-binding</keyword>
<keyword id="KW-0479">Metal-binding</keyword>
<keyword id="KW-0539">Nucleus</keyword>
<keyword id="KW-1185">Reference proteome</keyword>
<keyword id="KW-0677">Repeat</keyword>
<keyword id="KW-0804">Transcription</keyword>
<keyword id="KW-0805">Transcription regulation</keyword>
<keyword id="KW-0862">Zinc</keyword>
<keyword id="KW-0863">Zinc-finger</keyword>
<dbReference type="EMBL" id="U11888">
    <property type="protein sequence ID" value="AAA57504.1"/>
    <property type="molecule type" value="mRNA"/>
</dbReference>
<dbReference type="PIR" id="I50702">
    <property type="entry name" value="I50702"/>
</dbReference>
<dbReference type="SMR" id="P43692"/>
<dbReference type="STRING" id="9031.ENSGALP00000008569"/>
<dbReference type="PaxDb" id="9031-ENSGALP00000008569"/>
<dbReference type="VEuPathDB" id="HostDB:geneid_396391"/>
<dbReference type="eggNOG" id="KOG1601">
    <property type="taxonomic scope" value="Eukaryota"/>
</dbReference>
<dbReference type="InParanoid" id="P43692"/>
<dbReference type="OrthoDB" id="515401at2759"/>
<dbReference type="PhylomeDB" id="P43692"/>
<dbReference type="Proteomes" id="UP000000539">
    <property type="component" value="Unassembled WGS sequence"/>
</dbReference>
<dbReference type="GO" id="GO:0005634">
    <property type="term" value="C:nucleus"/>
    <property type="evidence" value="ECO:0000315"/>
    <property type="project" value="AgBase"/>
</dbReference>
<dbReference type="GO" id="GO:0000987">
    <property type="term" value="F:cis-regulatory region sequence-specific DNA binding"/>
    <property type="evidence" value="ECO:0000315"/>
    <property type="project" value="AgBase"/>
</dbReference>
<dbReference type="GO" id="GO:0000981">
    <property type="term" value="F:DNA-binding transcription factor activity, RNA polymerase II-specific"/>
    <property type="evidence" value="ECO:0000318"/>
    <property type="project" value="GO_Central"/>
</dbReference>
<dbReference type="GO" id="GO:0000978">
    <property type="term" value="F:RNA polymerase II cis-regulatory region sequence-specific DNA binding"/>
    <property type="evidence" value="ECO:0000318"/>
    <property type="project" value="GO_Central"/>
</dbReference>
<dbReference type="GO" id="GO:0008270">
    <property type="term" value="F:zinc ion binding"/>
    <property type="evidence" value="ECO:0007669"/>
    <property type="project" value="UniProtKB-KW"/>
</dbReference>
<dbReference type="GO" id="GO:0045165">
    <property type="term" value="P:cell fate commitment"/>
    <property type="evidence" value="ECO:0000318"/>
    <property type="project" value="GO_Central"/>
</dbReference>
<dbReference type="GO" id="GO:0000122">
    <property type="term" value="P:negative regulation of transcription by RNA polymerase II"/>
    <property type="evidence" value="ECO:0000318"/>
    <property type="project" value="GO_Central"/>
</dbReference>
<dbReference type="GO" id="GO:0045944">
    <property type="term" value="P:positive regulation of transcription by RNA polymerase II"/>
    <property type="evidence" value="ECO:0000318"/>
    <property type="project" value="GO_Central"/>
</dbReference>
<dbReference type="CDD" id="cd00202">
    <property type="entry name" value="ZnF_GATA"/>
    <property type="match status" value="2"/>
</dbReference>
<dbReference type="FunFam" id="3.30.50.10:FF:000001">
    <property type="entry name" value="GATA transcription factor (GATAd)"/>
    <property type="match status" value="1"/>
</dbReference>
<dbReference type="FunFam" id="3.30.50.10:FF:000032">
    <property type="entry name" value="Transcription factor GATA-3"/>
    <property type="match status" value="1"/>
</dbReference>
<dbReference type="Gene3D" id="3.30.50.10">
    <property type="entry name" value="Erythroid Transcription Factor GATA-1, subunit A"/>
    <property type="match status" value="2"/>
</dbReference>
<dbReference type="InterPro" id="IPR008013">
    <property type="entry name" value="GATA_N"/>
</dbReference>
<dbReference type="InterPro" id="IPR016375">
    <property type="entry name" value="TF_GATA_4/5/6"/>
</dbReference>
<dbReference type="InterPro" id="IPR039355">
    <property type="entry name" value="Transcription_factor_GATA"/>
</dbReference>
<dbReference type="InterPro" id="IPR000679">
    <property type="entry name" value="Znf_GATA"/>
</dbReference>
<dbReference type="InterPro" id="IPR013088">
    <property type="entry name" value="Znf_NHR/GATA"/>
</dbReference>
<dbReference type="PANTHER" id="PTHR10071">
    <property type="entry name" value="TRANSCRIPTION FACTOR GATA FAMILY MEMBER"/>
    <property type="match status" value="1"/>
</dbReference>
<dbReference type="PANTHER" id="PTHR10071:SF289">
    <property type="entry name" value="TRANSCRIPTION FACTOR GATA-5"/>
    <property type="match status" value="1"/>
</dbReference>
<dbReference type="Pfam" id="PF00320">
    <property type="entry name" value="GATA"/>
    <property type="match status" value="2"/>
</dbReference>
<dbReference type="Pfam" id="PF05349">
    <property type="entry name" value="GATA-N"/>
    <property type="match status" value="1"/>
</dbReference>
<dbReference type="PIRSF" id="PIRSF003028">
    <property type="entry name" value="TF_GATA_4/5/6"/>
    <property type="match status" value="1"/>
</dbReference>
<dbReference type="PRINTS" id="PR00619">
    <property type="entry name" value="GATAZNFINGER"/>
</dbReference>
<dbReference type="SMART" id="SM00401">
    <property type="entry name" value="ZnF_GATA"/>
    <property type="match status" value="2"/>
</dbReference>
<dbReference type="SUPFAM" id="SSF57716">
    <property type="entry name" value="Glucocorticoid receptor-like (DNA-binding domain)"/>
    <property type="match status" value="2"/>
</dbReference>
<dbReference type="PROSITE" id="PS00344">
    <property type="entry name" value="GATA_ZN_FINGER_1"/>
    <property type="match status" value="2"/>
</dbReference>
<dbReference type="PROSITE" id="PS50114">
    <property type="entry name" value="GATA_ZN_FINGER_2"/>
    <property type="match status" value="2"/>
</dbReference>
<gene>
    <name type="primary">GATA5</name>
</gene>
<comment type="function">
    <text evidence="3">Probably involved in bone morphogenetic protein (BMP)-mediated cardiac-specific gene expression. Binds to BMP response element (BMPRE) DNA sequences within cardiac activating regions.</text>
</comment>
<comment type="subcellular location">
    <subcellularLocation>
        <location>Nucleus</location>
    </subcellularLocation>
</comment>
<comment type="tissue specificity">
    <text>More abundant in stomach and small intestine, lower levels in heart, lung and spleen. Very low levels in liver and ovary.</text>
</comment>
<comment type="developmental stage">
    <text>Initially transcribed in the cardiac crescent prior to formation of the primordial heart tube. Following formation of the primitive heart, present in both endocardium and myocardium as well as in other lateral plate derivatives. Also transcribed in the primitive embryonic gut and in late stage embryos is sequentially up-regulated in distinct segments of gastrointestinal epithelia as they undergo terminal differentiation.</text>
</comment>
<organism>
    <name type="scientific">Gallus gallus</name>
    <name type="common">Chicken</name>
    <dbReference type="NCBI Taxonomy" id="9031"/>
    <lineage>
        <taxon>Eukaryota</taxon>
        <taxon>Metazoa</taxon>
        <taxon>Chordata</taxon>
        <taxon>Craniata</taxon>
        <taxon>Vertebrata</taxon>
        <taxon>Euteleostomi</taxon>
        <taxon>Archelosauria</taxon>
        <taxon>Archosauria</taxon>
        <taxon>Dinosauria</taxon>
        <taxon>Saurischia</taxon>
        <taxon>Theropoda</taxon>
        <taxon>Coelurosauria</taxon>
        <taxon>Aves</taxon>
        <taxon>Neognathae</taxon>
        <taxon>Galloanserae</taxon>
        <taxon>Galliformes</taxon>
        <taxon>Phasianidae</taxon>
        <taxon>Phasianinae</taxon>
        <taxon>Gallus</taxon>
    </lineage>
</organism>
<feature type="chain" id="PRO_0000083420" description="Transcription factor GATA-5">
    <location>
        <begin position="1"/>
        <end position="391"/>
    </location>
</feature>
<feature type="zinc finger region" description="GATA-type 1" evidence="1">
    <location>
        <begin position="186"/>
        <end position="210"/>
    </location>
</feature>
<feature type="zinc finger region" description="GATA-type 2" evidence="1">
    <location>
        <begin position="239"/>
        <end position="263"/>
    </location>
</feature>
<feature type="region of interest" description="Disordered" evidence="2">
    <location>
        <begin position="53"/>
        <end position="100"/>
    </location>
</feature>
<feature type="region of interest" description="Disordered" evidence="2">
    <location>
        <begin position="281"/>
        <end position="378"/>
    </location>
</feature>
<feature type="compositionally biased region" description="Polar residues" evidence="2">
    <location>
        <begin position="66"/>
        <end position="76"/>
    </location>
</feature>
<feature type="compositionally biased region" description="Basic residues" evidence="2">
    <location>
        <begin position="285"/>
        <end position="294"/>
    </location>
</feature>
<feature type="compositionally biased region" description="Low complexity" evidence="2">
    <location>
        <begin position="295"/>
        <end position="316"/>
    </location>
</feature>
<feature type="compositionally biased region" description="Polar residues" evidence="2">
    <location>
        <begin position="317"/>
        <end position="348"/>
    </location>
</feature>
<proteinExistence type="evidence at protein level"/>
<protein>
    <recommendedName>
        <fullName>Transcription factor GATA-5</fullName>
    </recommendedName>
    <alternativeName>
        <fullName>GATA-binding factor 5</fullName>
    </alternativeName>
</protein>
<name>GATA5_CHICK</name>
<reference key="1">
    <citation type="journal article" date="1994" name="J. Biol. Chem.">
        <title>GATA-4/5/6, a subfamily of three transcription factors transcribed in developing heart and gut.</title>
        <authorList>
            <person name="Laverriere A.C."/>
            <person name="Macneill C."/>
            <person name="Mueller C."/>
            <person name="Poelmann R.E."/>
            <person name="Burch J.B.E."/>
            <person name="Evans T."/>
        </authorList>
    </citation>
    <scope>NUCLEOTIDE SEQUENCE [MRNA]</scope>
    <source>
        <strain>White leghorn</strain>
    </source>
</reference>
<reference key="2">
    <citation type="journal article" date="2004" name="Development">
        <title>SMAD-mediated modulation of YY1 activity regulates the BMP response and cardiac-specific expression of a GATA4/5/6-dependent chick Nkx2.5 enhancer.</title>
        <authorList>
            <person name="Lee K.H."/>
            <person name="Evans S."/>
            <person name="Ruan T.Y."/>
            <person name="Lassar A.B."/>
        </authorList>
    </citation>
    <scope>FUNCTION</scope>
    <scope>DNA-BINDING</scope>
</reference>